<reference key="1">
    <citation type="journal article" date="2001" name="J. Bacteriol.">
        <title>Cloning and characterization of the gene cluster for palatinose metabolism from the phytopathogenic bacterium Erwinia rhapontici.</title>
        <authorList>
            <person name="Boernke F."/>
            <person name="Hajirezaei M."/>
            <person name="Sonnewald U."/>
        </authorList>
    </citation>
    <scope>NUCLEOTIDE SEQUENCE [GENOMIC DNA]</scope>
    <scope>FUNCTION</scope>
    <scope>CATALYTIC ACTIVITY</scope>
    <scope>BIOPHYSICOCHEMICAL PROPERTIES</scope>
    <scope>PATHWAY</scope>
    <scope>INDUCTION</scope>
    <source>
        <strain>ATCC 29283 / DSM 4484 / LMG 2688 / NCPPB 1578 / ICPB ER102 / CP/28</strain>
    </source>
</reference>
<name>PALQ_ERWRD</name>
<protein>
    <recommendedName>
        <fullName evidence="3">Palatinase</fullName>
        <ecNumber evidence="2">3.2.1.219</ecNumber>
    </recommendedName>
</protein>
<sequence length="551" mass="63029">MRSTPHWKEAVVYQVYPRSFMDSNGDGTGDLNGIISKLDYLQQLGITLLWLSPVYRSPMDDNGYDISDYEEIADIFGSMSDMERLIAEAKARDIGILMDLVVNHTSDEHPWFIDALSSKNSAYRDFYIWRAPAADGGPPDDSRSNFGGSAWTLDEASGEYYLHQFSTRQPDLNWENPRVREAIHAMMNRWLDKGIGGFRMDVIDLIGKEVDPQIMANGRHPHLYLQQMNRATFGPRGSVTVGETWSATPEDALLYSAEERQERQELTMVFQFEHIKLFWDEQYGKWCNQPFDLLRFKAVIDKWQTALADHGWNSLFWSNHDLPRAVSKFGDDGEYRVVSAKMLATALHCLKGTPYIYQGEEIGMTNVNFADIDDYRDIESLNLYQERIAEGMSHEAMMRGIHANGPDNARTPMQWTAVHMPGLPPVSPGLRLILTSGQWNVAAALDDPDSVFYHYQKLVALRKQLPLLVHGDFRQIVVEHPQVFAWLRTLGEQTLVVINNFTRDAVMLAIPDNLQSQQGRCLINNYAPREQLEPIMELQPYESFALLIERL</sequence>
<dbReference type="EC" id="3.2.1.219" evidence="2"/>
<dbReference type="EMBL" id="AF279283">
    <property type="protein sequence ID" value="AAK28737.1"/>
    <property type="molecule type" value="Genomic_DNA"/>
</dbReference>
<dbReference type="SMR" id="Q9AI62"/>
<dbReference type="CAZy" id="GH13">
    <property type="family name" value="Glycoside Hydrolase Family 13"/>
</dbReference>
<dbReference type="KEGG" id="ag:AAK28737"/>
<dbReference type="BioCyc" id="MetaCyc:MONOMER-124332"/>
<dbReference type="UniPathway" id="UPA01004"/>
<dbReference type="GO" id="GO:0004556">
    <property type="term" value="F:alpha-amylase activity"/>
    <property type="evidence" value="ECO:0007669"/>
    <property type="project" value="TreeGrafter"/>
</dbReference>
<dbReference type="GO" id="GO:0009313">
    <property type="term" value="P:oligosaccharide catabolic process"/>
    <property type="evidence" value="ECO:0007669"/>
    <property type="project" value="TreeGrafter"/>
</dbReference>
<dbReference type="CDD" id="cd11333">
    <property type="entry name" value="AmyAc_SI_OligoGlu_DGase"/>
    <property type="match status" value="1"/>
</dbReference>
<dbReference type="FunFam" id="3.20.20.80:FF:000064">
    <property type="entry name" value="Oligo-1,6-glucosidase"/>
    <property type="match status" value="1"/>
</dbReference>
<dbReference type="FunFam" id="2.60.40.1180:FF:000007">
    <property type="entry name" value="Sucrose isomerase"/>
    <property type="match status" value="1"/>
</dbReference>
<dbReference type="FunFam" id="3.90.400.10:FF:000002">
    <property type="entry name" value="Sucrose isomerase"/>
    <property type="match status" value="1"/>
</dbReference>
<dbReference type="Gene3D" id="3.20.20.80">
    <property type="entry name" value="Glycosidases"/>
    <property type="match status" value="1"/>
</dbReference>
<dbReference type="Gene3D" id="2.60.40.1180">
    <property type="entry name" value="Golgi alpha-mannosidase II"/>
    <property type="match status" value="1"/>
</dbReference>
<dbReference type="Gene3D" id="3.90.400.10">
    <property type="entry name" value="Oligo-1,6-glucosidase, Domain 2"/>
    <property type="match status" value="1"/>
</dbReference>
<dbReference type="InterPro" id="IPR006047">
    <property type="entry name" value="Glyco_hydro_13_cat_dom"/>
</dbReference>
<dbReference type="InterPro" id="IPR013780">
    <property type="entry name" value="Glyco_hydro_b"/>
</dbReference>
<dbReference type="InterPro" id="IPR017853">
    <property type="entry name" value="Glycoside_hydrolase_SF"/>
</dbReference>
<dbReference type="InterPro" id="IPR045857">
    <property type="entry name" value="O16G_dom_2"/>
</dbReference>
<dbReference type="InterPro" id="IPR056300">
    <property type="entry name" value="SusG-like_C"/>
</dbReference>
<dbReference type="NCBIfam" id="NF008183">
    <property type="entry name" value="PRK10933.1"/>
    <property type="match status" value="1"/>
</dbReference>
<dbReference type="PANTHER" id="PTHR10357">
    <property type="entry name" value="ALPHA-AMYLASE FAMILY MEMBER"/>
    <property type="match status" value="1"/>
</dbReference>
<dbReference type="PANTHER" id="PTHR10357:SF179">
    <property type="entry name" value="NEUTRAL AND BASIC AMINO ACID TRANSPORT PROTEIN RBAT"/>
    <property type="match status" value="1"/>
</dbReference>
<dbReference type="Pfam" id="PF00128">
    <property type="entry name" value="Alpha-amylase"/>
    <property type="match status" value="1"/>
</dbReference>
<dbReference type="Pfam" id="PF23915">
    <property type="entry name" value="SusG_C"/>
    <property type="match status" value="1"/>
</dbReference>
<dbReference type="SMART" id="SM00642">
    <property type="entry name" value="Aamy"/>
    <property type="match status" value="1"/>
</dbReference>
<dbReference type="SUPFAM" id="SSF51445">
    <property type="entry name" value="(Trans)glycosidases"/>
    <property type="match status" value="1"/>
</dbReference>
<dbReference type="SUPFAM" id="SSF51011">
    <property type="entry name" value="Glycosyl hydrolase domain"/>
    <property type="match status" value="1"/>
</dbReference>
<keyword id="KW-0119">Carbohydrate metabolism</keyword>
<keyword id="KW-0326">Glycosidase</keyword>
<keyword id="KW-0378">Hydrolase</keyword>
<accession>Q9AI62</accession>
<evidence type="ECO:0000250" key="1">
    <source>
        <dbReference type="UniProtKB" id="Q9ZEU2"/>
    </source>
</evidence>
<evidence type="ECO:0000269" key="2">
    <source>
    </source>
</evidence>
<evidence type="ECO:0000303" key="3">
    <source>
    </source>
</evidence>
<evidence type="ECO:0000305" key="4"/>
<feature type="chain" id="PRO_0000460867" description="Palatinase">
    <location>
        <begin position="1"/>
        <end position="551"/>
    </location>
</feature>
<feature type="active site" description="Nucleophile" evidence="1">
    <location>
        <position position="201"/>
    </location>
</feature>
<feature type="active site" description="Proton donor" evidence="1">
    <location>
        <position position="243"/>
    </location>
</feature>
<proteinExistence type="evidence at protein level"/>
<gene>
    <name evidence="3" type="primary">palQ</name>
</gene>
<organism>
    <name type="scientific">Erwinia rhapontici</name>
    <name type="common">Pectobacterium rhapontici</name>
    <dbReference type="NCBI Taxonomy" id="55212"/>
    <lineage>
        <taxon>Bacteria</taxon>
        <taxon>Pseudomonadati</taxon>
        <taxon>Pseudomonadota</taxon>
        <taxon>Gammaproteobacteria</taxon>
        <taxon>Enterobacterales</taxon>
        <taxon>Erwiniaceae</taxon>
        <taxon>Erwinia</taxon>
    </lineage>
</organism>
<comment type="function">
    <text evidence="2">Catalyzes the hydrolysis of palatinose (PubMed:11274100). Shows a strict specificity toward palatinose, and cannot release glucose from the disaccharides sucrose, maltose, trehalose and melibiose (PubMed:11274100). Involved in the degradation of palatinose, a sucrose isomer that is formed as a reserve material under conditions of excess carbon availability, sequestered in a form unavailable to competitors such as fungi or the host plant, and whose consumption appears to be postponed until the preferentially metabolized carbon source (e.g. sucrose) is depleted (PubMed:11274100).</text>
</comment>
<comment type="catalytic activity">
    <reaction evidence="2">
        <text>6-O-alpha-D-glucopyranosyl-D-fructose + H2O = alpha-D-glucose + D-fructose</text>
        <dbReference type="Rhea" id="RHEA:68808"/>
        <dbReference type="ChEBI" id="CHEBI:15377"/>
        <dbReference type="ChEBI" id="CHEBI:17925"/>
        <dbReference type="ChEBI" id="CHEBI:18394"/>
        <dbReference type="ChEBI" id="CHEBI:37721"/>
        <dbReference type="EC" id="3.2.1.219"/>
    </reaction>
    <physiologicalReaction direction="left-to-right" evidence="2">
        <dbReference type="Rhea" id="RHEA:68809"/>
    </physiologicalReaction>
</comment>
<comment type="biophysicochemical properties">
    <kinetics>
        <KM evidence="2">10 mM for palatinose</KM>
    </kinetics>
    <phDependence>
        <text evidence="2">Optimum pH is 7.0.</text>
    </phDependence>
    <temperatureDependence>
        <text evidence="2">Optimum temperature is 30 degrees Celsius.</text>
    </temperatureDependence>
</comment>
<comment type="pathway">
    <text evidence="2">Glycan degradation; palatinose degradation.</text>
</comment>
<comment type="induction">
    <text evidence="2">Down-regulated by sucrose and up-regulated by palatinose (PubMed:11274100). Part of the palEFGHKQZ operon (PubMed:11274100).</text>
</comment>
<comment type="similarity">
    <text evidence="4">Belongs to the glycosyl hydrolase 13 family.</text>
</comment>